<evidence type="ECO:0000255" key="1">
    <source>
        <dbReference type="HAMAP-Rule" id="MF_01547"/>
    </source>
</evidence>
<proteinExistence type="inferred from homology"/>
<sequence length="208" mass="23461">MGKKRSASSSRWLNEHFKDPFVQKAHKQKLRSRAYFKLDEIQQSDRLFKPGMTVVDLGAAPGGWSQYVVTQIGDKGRIIACDILDMDPIVGVDFLQGDFRDENVLAALLDRVGEDQVDVVMSDMAPNFSGMPSVDIPRAMYLVELALDMCKQVLAKKGSFVVKVFQGEGFDEYLREIRSLFTTVKVRKPEASRDRSREVYIVATGYRG</sequence>
<accession>Q65TZ0</accession>
<protein>
    <recommendedName>
        <fullName evidence="1">Ribosomal RNA large subunit methyltransferase E</fullName>
        <ecNumber evidence="1">2.1.1.166</ecNumber>
    </recommendedName>
    <alternativeName>
        <fullName evidence="1">23S rRNA Um2552 methyltransferase</fullName>
    </alternativeName>
    <alternativeName>
        <fullName evidence="1">rRNA (uridine-2'-O-)-methyltransferase</fullName>
    </alternativeName>
</protein>
<organism>
    <name type="scientific">Mannheimia succiniciproducens (strain KCTC 0769BP / MBEL55E)</name>
    <dbReference type="NCBI Taxonomy" id="221988"/>
    <lineage>
        <taxon>Bacteria</taxon>
        <taxon>Pseudomonadati</taxon>
        <taxon>Pseudomonadota</taxon>
        <taxon>Gammaproteobacteria</taxon>
        <taxon>Pasteurellales</taxon>
        <taxon>Pasteurellaceae</taxon>
        <taxon>Basfia</taxon>
    </lineage>
</organism>
<reference key="1">
    <citation type="journal article" date="2004" name="Nat. Biotechnol.">
        <title>The genome sequence of the capnophilic rumen bacterium Mannheimia succiniciproducens.</title>
        <authorList>
            <person name="Hong S.H."/>
            <person name="Kim J.S."/>
            <person name="Lee S.Y."/>
            <person name="In Y.H."/>
            <person name="Choi S.S."/>
            <person name="Rih J.-K."/>
            <person name="Kim C.H."/>
            <person name="Jeong H."/>
            <person name="Hur C.G."/>
            <person name="Kim J.J."/>
        </authorList>
    </citation>
    <scope>NUCLEOTIDE SEQUENCE [LARGE SCALE GENOMIC DNA]</scope>
    <source>
        <strain>KCTC 0769BP / MBEL55E</strain>
    </source>
</reference>
<name>RLME_MANSM</name>
<comment type="function">
    <text evidence="1">Specifically methylates the uridine in position 2552 of 23S rRNA at the 2'-O position of the ribose in the fully assembled 50S ribosomal subunit.</text>
</comment>
<comment type="catalytic activity">
    <reaction evidence="1">
        <text>uridine(2552) in 23S rRNA + S-adenosyl-L-methionine = 2'-O-methyluridine(2552) in 23S rRNA + S-adenosyl-L-homocysteine + H(+)</text>
        <dbReference type="Rhea" id="RHEA:42720"/>
        <dbReference type="Rhea" id="RHEA-COMP:10202"/>
        <dbReference type="Rhea" id="RHEA-COMP:10203"/>
        <dbReference type="ChEBI" id="CHEBI:15378"/>
        <dbReference type="ChEBI" id="CHEBI:57856"/>
        <dbReference type="ChEBI" id="CHEBI:59789"/>
        <dbReference type="ChEBI" id="CHEBI:65315"/>
        <dbReference type="ChEBI" id="CHEBI:74478"/>
        <dbReference type="EC" id="2.1.1.166"/>
    </reaction>
</comment>
<comment type="subcellular location">
    <subcellularLocation>
        <location evidence="1">Cytoplasm</location>
    </subcellularLocation>
</comment>
<comment type="similarity">
    <text evidence="1">Belongs to the class I-like SAM-binding methyltransferase superfamily. RNA methyltransferase RlmE family.</text>
</comment>
<dbReference type="EC" id="2.1.1.166" evidence="1"/>
<dbReference type="EMBL" id="AE016827">
    <property type="protein sequence ID" value="AAU37570.1"/>
    <property type="molecule type" value="Genomic_DNA"/>
</dbReference>
<dbReference type="RefSeq" id="WP_011200140.1">
    <property type="nucleotide sequence ID" value="NC_006300.1"/>
</dbReference>
<dbReference type="SMR" id="Q65TZ0"/>
<dbReference type="STRING" id="221988.MS0963"/>
<dbReference type="KEGG" id="msu:MS0963"/>
<dbReference type="eggNOG" id="COG0293">
    <property type="taxonomic scope" value="Bacteria"/>
</dbReference>
<dbReference type="HOGENOM" id="CLU_009422_4_0_6"/>
<dbReference type="OrthoDB" id="9790080at2"/>
<dbReference type="Proteomes" id="UP000000607">
    <property type="component" value="Chromosome"/>
</dbReference>
<dbReference type="GO" id="GO:0005737">
    <property type="term" value="C:cytoplasm"/>
    <property type="evidence" value="ECO:0007669"/>
    <property type="project" value="UniProtKB-SubCell"/>
</dbReference>
<dbReference type="GO" id="GO:0008650">
    <property type="term" value="F:rRNA (uridine-2'-O-)-methyltransferase activity"/>
    <property type="evidence" value="ECO:0007669"/>
    <property type="project" value="UniProtKB-UniRule"/>
</dbReference>
<dbReference type="FunFam" id="3.40.50.150:FF:000005">
    <property type="entry name" value="Ribosomal RNA large subunit methyltransferase E"/>
    <property type="match status" value="1"/>
</dbReference>
<dbReference type="Gene3D" id="3.40.50.150">
    <property type="entry name" value="Vaccinia Virus protein VP39"/>
    <property type="match status" value="1"/>
</dbReference>
<dbReference type="HAMAP" id="MF_01547">
    <property type="entry name" value="RNA_methyltr_E"/>
    <property type="match status" value="1"/>
</dbReference>
<dbReference type="InterPro" id="IPR050082">
    <property type="entry name" value="RNA_methyltr_RlmE"/>
</dbReference>
<dbReference type="InterPro" id="IPR002877">
    <property type="entry name" value="RNA_MeTrfase_FtsJ_dom"/>
</dbReference>
<dbReference type="InterPro" id="IPR015507">
    <property type="entry name" value="rRNA-MeTfrase_E"/>
</dbReference>
<dbReference type="InterPro" id="IPR004512">
    <property type="entry name" value="rRNA_MeTrfase_gammaproteobac"/>
</dbReference>
<dbReference type="InterPro" id="IPR029063">
    <property type="entry name" value="SAM-dependent_MTases_sf"/>
</dbReference>
<dbReference type="NCBIfam" id="NF008390">
    <property type="entry name" value="PRK11188.1"/>
    <property type="match status" value="1"/>
</dbReference>
<dbReference type="NCBIfam" id="TIGR00438">
    <property type="entry name" value="rrmJ"/>
    <property type="match status" value="1"/>
</dbReference>
<dbReference type="PANTHER" id="PTHR10920">
    <property type="entry name" value="RIBOSOMAL RNA METHYLTRANSFERASE"/>
    <property type="match status" value="1"/>
</dbReference>
<dbReference type="PANTHER" id="PTHR10920:SF18">
    <property type="entry name" value="RRNA METHYLTRANSFERASE 2, MITOCHONDRIAL"/>
    <property type="match status" value="1"/>
</dbReference>
<dbReference type="Pfam" id="PF01728">
    <property type="entry name" value="FtsJ"/>
    <property type="match status" value="1"/>
</dbReference>
<dbReference type="PIRSF" id="PIRSF005461">
    <property type="entry name" value="23S_rRNA_mtase"/>
    <property type="match status" value="1"/>
</dbReference>
<dbReference type="SUPFAM" id="SSF53335">
    <property type="entry name" value="S-adenosyl-L-methionine-dependent methyltransferases"/>
    <property type="match status" value="1"/>
</dbReference>
<feature type="chain" id="PRO_0000155509" description="Ribosomal RNA large subunit methyltransferase E">
    <location>
        <begin position="1"/>
        <end position="208"/>
    </location>
</feature>
<feature type="active site" description="Proton acceptor" evidence="1">
    <location>
        <position position="163"/>
    </location>
</feature>
<feature type="binding site" evidence="1">
    <location>
        <position position="62"/>
    </location>
    <ligand>
        <name>S-adenosyl-L-methionine</name>
        <dbReference type="ChEBI" id="CHEBI:59789"/>
    </ligand>
</feature>
<feature type="binding site" evidence="1">
    <location>
        <position position="64"/>
    </location>
    <ligand>
        <name>S-adenosyl-L-methionine</name>
        <dbReference type="ChEBI" id="CHEBI:59789"/>
    </ligand>
</feature>
<feature type="binding site" evidence="1">
    <location>
        <position position="82"/>
    </location>
    <ligand>
        <name>S-adenosyl-L-methionine</name>
        <dbReference type="ChEBI" id="CHEBI:59789"/>
    </ligand>
</feature>
<feature type="binding site" evidence="1">
    <location>
        <position position="98"/>
    </location>
    <ligand>
        <name>S-adenosyl-L-methionine</name>
        <dbReference type="ChEBI" id="CHEBI:59789"/>
    </ligand>
</feature>
<feature type="binding site" evidence="1">
    <location>
        <position position="123"/>
    </location>
    <ligand>
        <name>S-adenosyl-L-methionine</name>
        <dbReference type="ChEBI" id="CHEBI:59789"/>
    </ligand>
</feature>
<gene>
    <name evidence="1" type="primary">rlmE</name>
    <name evidence="1" type="synonym">ftsJ</name>
    <name evidence="1" type="synonym">rrmJ</name>
    <name type="ordered locus">MS0963</name>
</gene>
<keyword id="KW-0963">Cytoplasm</keyword>
<keyword id="KW-0489">Methyltransferase</keyword>
<keyword id="KW-0698">rRNA processing</keyword>
<keyword id="KW-0949">S-adenosyl-L-methionine</keyword>
<keyword id="KW-0808">Transferase</keyword>